<comment type="function">
    <text evidence="2">Has antibacterial activity against Gram-negative bacterium E.coli ATCC 25922 (MIC=320 uM) but not against S.pneumoniae ATCC 700603, S.choleraesuis ATCC 14028 or Gram-positive bacterium S.aureus ATCC 29313. Shows no hemolytic activity and no cytotoxicity.</text>
</comment>
<comment type="subcellular location">
    <subcellularLocation>
        <location evidence="2">Secreted</location>
    </subcellularLocation>
</comment>
<comment type="tissue specificity">
    <text evidence="5">Expressed by the skin glands.</text>
</comment>
<comment type="mass spectrometry" mass="2528.53" method="MALDI" evidence="2"/>
<comment type="similarity">
    <text evidence="4">Belongs to the frog skin active peptide (FSAP) family. Ocellatin subfamily.</text>
</comment>
<comment type="online information" name="The antimicrobial peptide database">
    <link uri="https://wangapd3.com/database/query_output.php?ID=02748"/>
</comment>
<keyword id="KW-0027">Amidation</keyword>
<keyword id="KW-0878">Amphibian defense peptide</keyword>
<keyword id="KW-0044">Antibiotic</keyword>
<keyword id="KW-0929">Antimicrobial</keyword>
<keyword id="KW-0165">Cleavage on pair of basic residues</keyword>
<keyword id="KW-0903">Direct protein sequencing</keyword>
<keyword id="KW-0964">Secreted</keyword>
<keyword id="KW-0732">Signal</keyword>
<accession>C0HJZ8</accession>
<name>OCE3_LEPPU</name>
<feature type="signal peptide" evidence="1">
    <location>
        <begin position="1"/>
        <end position="22"/>
    </location>
</feature>
<feature type="propeptide" id="PRO_0000436212" evidence="4">
    <location>
        <begin position="23"/>
        <end position="39"/>
    </location>
</feature>
<feature type="peptide" id="PRO_0000436213" description="Ocellatin-PT3" evidence="2">
    <location>
        <begin position="42"/>
        <end position="66"/>
    </location>
</feature>
<feature type="modified residue" description="Valine amide" evidence="2">
    <location>
        <position position="66"/>
    </location>
</feature>
<reference evidence="4" key="1">
    <citation type="journal article" date="2015" name="J. Nat. Prod.">
        <title>Characterization and biological activities of ocellatin peptides from the skin secretion of the frog Leptodactylus pustulatus.</title>
        <authorList>
            <person name="Marani M.M."/>
            <person name="Dourado F.S."/>
            <person name="Quelemes P.V."/>
            <person name="de Araujo A.R."/>
            <person name="Perfeito M.L."/>
            <person name="Barbosa E.A."/>
            <person name="Veras L.M."/>
            <person name="Coelho A.L."/>
            <person name="Andrade E.B."/>
            <person name="Eaton P."/>
            <person name="Longo J.P."/>
            <person name="Azevedo R.B."/>
            <person name="Delerue-Matos C."/>
            <person name="Leite J.R."/>
        </authorList>
    </citation>
    <scope>NUCLEOTIDE SEQUENCE [MRNA]</scope>
    <scope>PROTEIN SEQUENCE OF 42-66</scope>
    <scope>FUNCTION</scope>
    <scope>SUBCELLULAR LOCATION</scope>
    <scope>MASS SPECTROMETRY</scope>
    <scope>AMIDATION AT VAL-66</scope>
    <scope>IDENTIFICATION BY MASS SPECTROMETRY</scope>
    <source>
        <tissue evidence="3">Skin secretion</tissue>
    </source>
</reference>
<evidence type="ECO:0000255" key="1"/>
<evidence type="ECO:0000269" key="2">
    <source>
    </source>
</evidence>
<evidence type="ECO:0000303" key="3">
    <source>
    </source>
</evidence>
<evidence type="ECO:0000305" key="4"/>
<evidence type="ECO:0000305" key="5">
    <source>
    </source>
</evidence>
<proteinExistence type="evidence at protein level"/>
<sequence length="66" mass="7333">MAFLKKSLFLVLFLGLVSLSICDEEKRQDEDDDDDDDEEKRGVIDIIKGAGKDLIAHAIGKLAEKV</sequence>
<organism>
    <name type="scientific">Leptodactylus pustulatus</name>
    <name type="common">Ceara white-lipped frog</name>
    <dbReference type="NCBI Taxonomy" id="1349691"/>
    <lineage>
        <taxon>Eukaryota</taxon>
        <taxon>Metazoa</taxon>
        <taxon>Chordata</taxon>
        <taxon>Craniata</taxon>
        <taxon>Vertebrata</taxon>
        <taxon>Euteleostomi</taxon>
        <taxon>Amphibia</taxon>
        <taxon>Batrachia</taxon>
        <taxon>Anura</taxon>
        <taxon>Neobatrachia</taxon>
        <taxon>Hyloidea</taxon>
        <taxon>Leptodactylidae</taxon>
        <taxon>Leptodactylinae</taxon>
        <taxon>Leptodactylus</taxon>
    </lineage>
</organism>
<dbReference type="GO" id="GO:0005576">
    <property type="term" value="C:extracellular region"/>
    <property type="evidence" value="ECO:0007669"/>
    <property type="project" value="UniProtKB-SubCell"/>
</dbReference>
<dbReference type="GO" id="GO:0042742">
    <property type="term" value="P:defense response to bacterium"/>
    <property type="evidence" value="ECO:0007669"/>
    <property type="project" value="UniProtKB-KW"/>
</dbReference>
<dbReference type="GO" id="GO:0019836">
    <property type="term" value="P:symbiont-mediated hemolysis of host erythrocyte"/>
    <property type="evidence" value="ECO:0007669"/>
    <property type="project" value="InterPro"/>
</dbReference>
<dbReference type="InterPro" id="IPR012518">
    <property type="entry name" value="Antimicrobial15"/>
</dbReference>
<dbReference type="InterPro" id="IPR004275">
    <property type="entry name" value="Frog_antimicrobial_propeptide"/>
</dbReference>
<dbReference type="InterPro" id="IPR016322">
    <property type="entry name" value="FSAP"/>
</dbReference>
<dbReference type="Pfam" id="PF08110">
    <property type="entry name" value="Antimicrobial15"/>
    <property type="match status" value="1"/>
</dbReference>
<dbReference type="Pfam" id="PF03032">
    <property type="entry name" value="FSAP_sig_propep"/>
    <property type="match status" value="1"/>
</dbReference>
<dbReference type="PIRSF" id="PIRSF001822">
    <property type="entry name" value="Dermaseptin_precursor"/>
    <property type="match status" value="1"/>
</dbReference>
<protein>
    <recommendedName>
        <fullName evidence="3">Ocellatin-PT3</fullName>
    </recommendedName>
</protein>